<proteinExistence type="inferred from homology"/>
<comment type="catalytic activity">
    <reaction>
        <text>(2R,3R)-tartrate = oxaloacetate + H2O</text>
        <dbReference type="Rhea" id="RHEA:15413"/>
        <dbReference type="ChEBI" id="CHEBI:15377"/>
        <dbReference type="ChEBI" id="CHEBI:16452"/>
        <dbReference type="ChEBI" id="CHEBI:30924"/>
        <dbReference type="EC" id="4.2.1.32"/>
    </reaction>
</comment>
<comment type="cofactor">
    <cofactor evidence="3">
        <name>iron-sulfur cluster</name>
        <dbReference type="ChEBI" id="CHEBI:30408"/>
    </cofactor>
</comment>
<comment type="subunit">
    <text evidence="1">Tetramer of two alpha and two beta subunits.</text>
</comment>
<comment type="similarity">
    <text evidence="4">Belongs to the class-I fumarase family.</text>
</comment>
<gene>
    <name type="primary">ttdA</name>
    <name type="ordered locus">SSON_3198</name>
</gene>
<protein>
    <recommendedName>
        <fullName>L(+)-tartrate dehydratase subunit alpha</fullName>
        <shortName>L-TTD alpha</shortName>
        <ecNumber>4.2.1.32</ecNumber>
    </recommendedName>
</protein>
<dbReference type="EC" id="4.2.1.32"/>
<dbReference type="EMBL" id="CP000038">
    <property type="protein sequence ID" value="AAZ89780.1"/>
    <property type="molecule type" value="Genomic_DNA"/>
</dbReference>
<dbReference type="RefSeq" id="WP_000986797.1">
    <property type="nucleotide sequence ID" value="NC_007384.1"/>
</dbReference>
<dbReference type="SMR" id="Q3YXI2"/>
<dbReference type="GeneID" id="93778932"/>
<dbReference type="KEGG" id="ssn:SSON_3198"/>
<dbReference type="HOGENOM" id="CLU_041245_1_0_6"/>
<dbReference type="Proteomes" id="UP000002529">
    <property type="component" value="Chromosome"/>
</dbReference>
<dbReference type="GO" id="GO:0051539">
    <property type="term" value="F:4 iron, 4 sulfur cluster binding"/>
    <property type="evidence" value="ECO:0007669"/>
    <property type="project" value="UniProtKB-KW"/>
</dbReference>
<dbReference type="GO" id="GO:0008730">
    <property type="term" value="F:L(+)-tartrate dehydratase activity"/>
    <property type="evidence" value="ECO:0007669"/>
    <property type="project" value="UniProtKB-EC"/>
</dbReference>
<dbReference type="GO" id="GO:0046872">
    <property type="term" value="F:metal ion binding"/>
    <property type="evidence" value="ECO:0007669"/>
    <property type="project" value="UniProtKB-KW"/>
</dbReference>
<dbReference type="InterPro" id="IPR051208">
    <property type="entry name" value="Class-I_Fumarase/Tartrate_DH"/>
</dbReference>
<dbReference type="InterPro" id="IPR004646">
    <property type="entry name" value="Fe-S_hydro-lyase_TtdA-typ_cat"/>
</dbReference>
<dbReference type="NCBIfam" id="NF006084">
    <property type="entry name" value="PRK08230.1"/>
    <property type="match status" value="1"/>
</dbReference>
<dbReference type="NCBIfam" id="TIGR00722">
    <property type="entry name" value="ttdA_fumA_fumB"/>
    <property type="match status" value="1"/>
</dbReference>
<dbReference type="PANTHER" id="PTHR30389">
    <property type="entry name" value="FUMARATE HYDRATASE-RELATED"/>
    <property type="match status" value="1"/>
</dbReference>
<dbReference type="PANTHER" id="PTHR30389:SF19">
    <property type="entry name" value="L(+)-TARTRATE DEHYDRATASE SUBUNIT ALPHA"/>
    <property type="match status" value="1"/>
</dbReference>
<dbReference type="Pfam" id="PF05681">
    <property type="entry name" value="Fumerase"/>
    <property type="match status" value="1"/>
</dbReference>
<evidence type="ECO:0000250" key="1"/>
<evidence type="ECO:0000250" key="2">
    <source>
        <dbReference type="UniProtKB" id="E9AE57"/>
    </source>
</evidence>
<evidence type="ECO:0000250" key="3">
    <source>
        <dbReference type="UniProtKB" id="P05847"/>
    </source>
</evidence>
<evidence type="ECO:0000305" key="4"/>
<keyword id="KW-0004">4Fe-4S</keyword>
<keyword id="KW-0408">Iron</keyword>
<keyword id="KW-0411">Iron-sulfur</keyword>
<keyword id="KW-0456">Lyase</keyword>
<keyword id="KW-0479">Metal-binding</keyword>
<keyword id="KW-1185">Reference proteome</keyword>
<accession>Q3YXI2</accession>
<feature type="chain" id="PRO_0000262702" description="L(+)-tartrate dehydratase subunit alpha">
    <location>
        <begin position="1"/>
        <end position="303"/>
    </location>
</feature>
<feature type="binding site" evidence="2">
    <location>
        <position position="71"/>
    </location>
    <ligand>
        <name>iron-sulfur cluster</name>
        <dbReference type="ChEBI" id="CHEBI:30408"/>
    </ligand>
</feature>
<feature type="binding site" evidence="2">
    <location>
        <position position="190"/>
    </location>
    <ligand>
        <name>iron-sulfur cluster</name>
        <dbReference type="ChEBI" id="CHEBI:30408"/>
    </ligand>
</feature>
<feature type="binding site" evidence="2">
    <location>
        <position position="277"/>
    </location>
    <ligand>
        <name>iron-sulfur cluster</name>
        <dbReference type="ChEBI" id="CHEBI:30408"/>
    </ligand>
</feature>
<reference key="1">
    <citation type="journal article" date="2005" name="Nucleic Acids Res.">
        <title>Genome dynamics and diversity of Shigella species, the etiologic agents of bacillary dysentery.</title>
        <authorList>
            <person name="Yang F."/>
            <person name="Yang J."/>
            <person name="Zhang X."/>
            <person name="Chen L."/>
            <person name="Jiang Y."/>
            <person name="Yan Y."/>
            <person name="Tang X."/>
            <person name="Wang J."/>
            <person name="Xiong Z."/>
            <person name="Dong J."/>
            <person name="Xue Y."/>
            <person name="Zhu Y."/>
            <person name="Xu X."/>
            <person name="Sun L."/>
            <person name="Chen S."/>
            <person name="Nie H."/>
            <person name="Peng J."/>
            <person name="Xu J."/>
            <person name="Wang Y."/>
            <person name="Yuan Z."/>
            <person name="Wen Y."/>
            <person name="Yao Z."/>
            <person name="Shen Y."/>
            <person name="Qiang B."/>
            <person name="Hou Y."/>
            <person name="Yu J."/>
            <person name="Jin Q."/>
        </authorList>
    </citation>
    <scope>NUCLEOTIDE SEQUENCE [LARGE SCALE GENOMIC DNA]</scope>
    <source>
        <strain>Ss046</strain>
    </source>
</reference>
<organism>
    <name type="scientific">Shigella sonnei (strain Ss046)</name>
    <dbReference type="NCBI Taxonomy" id="300269"/>
    <lineage>
        <taxon>Bacteria</taxon>
        <taxon>Pseudomonadati</taxon>
        <taxon>Pseudomonadota</taxon>
        <taxon>Gammaproteobacteria</taxon>
        <taxon>Enterobacterales</taxon>
        <taxon>Enterobacteriaceae</taxon>
        <taxon>Shigella</taxon>
    </lineage>
</organism>
<name>TTDA_SHISS</name>
<sequence length="303" mass="32734">MMSESNKQQAVNKLTEIVANFTAMISTRMPDDVVDKLKQLKDAETSSMGKIIYHTMFDNMQKAIDLNRPACQDTGEIMFFVKVGSRFPLLGELQSILKQAVEEATVKAPLRHNAVEIFDEVNTGKNTGSGVPWVTWDIIPDNDDAEIEVYMAGGGCTLPGRSKVLMPSEGYEGVVKFVFENISTLAVNACPPVLVGVGIATSVETAAVLSRKAILRPIGSRHPNPKAAELELRLEEGLNRLGIGPQGLTGNSSVMGVHIESAARHPSTIGVAVSTGCWAHRRGTLLVHADLTFENLSHTRSAL</sequence>